<proteinExistence type="inferred from homology"/>
<reference key="1">
    <citation type="journal article" date="2000" name="Nature">
        <title>Complete DNA sequence of a serogroup A strain of Neisseria meningitidis Z2491.</title>
        <authorList>
            <person name="Parkhill J."/>
            <person name="Achtman M."/>
            <person name="James K.D."/>
            <person name="Bentley S.D."/>
            <person name="Churcher C.M."/>
            <person name="Klee S.R."/>
            <person name="Morelli G."/>
            <person name="Basham D."/>
            <person name="Brown D."/>
            <person name="Chillingworth T."/>
            <person name="Davies R.M."/>
            <person name="Davis P."/>
            <person name="Devlin K."/>
            <person name="Feltwell T."/>
            <person name="Hamlin N."/>
            <person name="Holroyd S."/>
            <person name="Jagels K."/>
            <person name="Leather S."/>
            <person name="Moule S."/>
            <person name="Mungall K.L."/>
            <person name="Quail M.A."/>
            <person name="Rajandream M.A."/>
            <person name="Rutherford K.M."/>
            <person name="Simmonds M."/>
            <person name="Skelton J."/>
            <person name="Whitehead S."/>
            <person name="Spratt B.G."/>
            <person name="Barrell B.G."/>
        </authorList>
    </citation>
    <scope>NUCLEOTIDE SEQUENCE [LARGE SCALE GENOMIC DNA]</scope>
    <source>
        <strain>DSM 15465 / Z2491</strain>
    </source>
</reference>
<gene>
    <name evidence="1" type="primary">rsmG</name>
    <name type="ordered locus">NMA0077</name>
</gene>
<protein>
    <recommendedName>
        <fullName evidence="1">Ribosomal RNA small subunit methyltransferase G</fullName>
        <ecNumber evidence="1">2.1.1.170</ecNumber>
    </recommendedName>
    <alternativeName>
        <fullName evidence="1">16S rRNA 7-methylguanosine methyltransferase</fullName>
        <shortName evidence="1">16S rRNA m7G methyltransferase</shortName>
    </alternativeName>
</protein>
<dbReference type="EC" id="2.1.1.170" evidence="1"/>
<dbReference type="EMBL" id="AL157959">
    <property type="protein sequence ID" value="CAM07396.1"/>
    <property type="molecule type" value="Genomic_DNA"/>
</dbReference>
<dbReference type="PIR" id="D81999">
    <property type="entry name" value="D81999"/>
</dbReference>
<dbReference type="RefSeq" id="WP_002246763.1">
    <property type="nucleotide sequence ID" value="NC_003116.1"/>
</dbReference>
<dbReference type="SMR" id="Q9JX38"/>
<dbReference type="EnsemblBacteria" id="CAM07396">
    <property type="protein sequence ID" value="CAM07396"/>
    <property type="gene ID" value="NMA0077"/>
</dbReference>
<dbReference type="KEGG" id="nma:NMA0077"/>
<dbReference type="HOGENOM" id="CLU_065341_2_0_4"/>
<dbReference type="Proteomes" id="UP000000626">
    <property type="component" value="Chromosome"/>
</dbReference>
<dbReference type="GO" id="GO:0005829">
    <property type="term" value="C:cytosol"/>
    <property type="evidence" value="ECO:0007669"/>
    <property type="project" value="TreeGrafter"/>
</dbReference>
<dbReference type="GO" id="GO:0070043">
    <property type="term" value="F:rRNA (guanine-N7-)-methyltransferase activity"/>
    <property type="evidence" value="ECO:0007669"/>
    <property type="project" value="UniProtKB-UniRule"/>
</dbReference>
<dbReference type="CDD" id="cd02440">
    <property type="entry name" value="AdoMet_MTases"/>
    <property type="match status" value="1"/>
</dbReference>
<dbReference type="FunFam" id="3.40.50.150:FF:000353">
    <property type="entry name" value="Ribosomal RNA small subunit methyltransferase G"/>
    <property type="match status" value="1"/>
</dbReference>
<dbReference type="Gene3D" id="3.40.50.150">
    <property type="entry name" value="Vaccinia Virus protein VP39"/>
    <property type="match status" value="1"/>
</dbReference>
<dbReference type="HAMAP" id="MF_00074">
    <property type="entry name" value="16SrRNA_methyltr_G"/>
    <property type="match status" value="1"/>
</dbReference>
<dbReference type="InterPro" id="IPR003682">
    <property type="entry name" value="rRNA_ssu_MeTfrase_G"/>
</dbReference>
<dbReference type="InterPro" id="IPR029063">
    <property type="entry name" value="SAM-dependent_MTases_sf"/>
</dbReference>
<dbReference type="NCBIfam" id="TIGR00138">
    <property type="entry name" value="rsmG_gidB"/>
    <property type="match status" value="1"/>
</dbReference>
<dbReference type="PANTHER" id="PTHR31760">
    <property type="entry name" value="S-ADENOSYL-L-METHIONINE-DEPENDENT METHYLTRANSFERASES SUPERFAMILY PROTEIN"/>
    <property type="match status" value="1"/>
</dbReference>
<dbReference type="PANTHER" id="PTHR31760:SF0">
    <property type="entry name" value="S-ADENOSYL-L-METHIONINE-DEPENDENT METHYLTRANSFERASES SUPERFAMILY PROTEIN"/>
    <property type="match status" value="1"/>
</dbReference>
<dbReference type="Pfam" id="PF02527">
    <property type="entry name" value="GidB"/>
    <property type="match status" value="1"/>
</dbReference>
<dbReference type="PIRSF" id="PIRSF003078">
    <property type="entry name" value="GidB"/>
    <property type="match status" value="1"/>
</dbReference>
<dbReference type="SUPFAM" id="SSF53335">
    <property type="entry name" value="S-adenosyl-L-methionine-dependent methyltransferases"/>
    <property type="match status" value="1"/>
</dbReference>
<organism>
    <name type="scientific">Neisseria meningitidis serogroup A / serotype 4A (strain DSM 15465 / Z2491)</name>
    <dbReference type="NCBI Taxonomy" id="122587"/>
    <lineage>
        <taxon>Bacteria</taxon>
        <taxon>Pseudomonadati</taxon>
        <taxon>Pseudomonadota</taxon>
        <taxon>Betaproteobacteria</taxon>
        <taxon>Neisseriales</taxon>
        <taxon>Neisseriaceae</taxon>
        <taxon>Neisseria</taxon>
    </lineage>
</organism>
<sequence>MERKERLRAGIAAMGLDISETAQDRLLAYVDLLKKWNKTYNLTALRDEEKMIVHHLLDSLTLLPHIEGVQTMLDVGSGGGQPGIPAAVCRPDVQITLLDANTKKTAFLQQAVIELGLDNVRVVSGRVEAVSDVRADVVTSRAFAELADFVSWTAHLLKDGGYWAAMKGVYPQGEIGRLPQDVCVEKVQRLDVPGLDAERHIVILSKR</sequence>
<feature type="chain" id="PRO_0000184292" description="Ribosomal RNA small subunit methyltransferase G">
    <location>
        <begin position="1"/>
        <end position="207"/>
    </location>
</feature>
<feature type="binding site" evidence="1">
    <location>
        <position position="76"/>
    </location>
    <ligand>
        <name>S-adenosyl-L-methionine</name>
        <dbReference type="ChEBI" id="CHEBI:59789"/>
    </ligand>
</feature>
<feature type="binding site" evidence="1">
    <location>
        <position position="81"/>
    </location>
    <ligand>
        <name>S-adenosyl-L-methionine</name>
        <dbReference type="ChEBI" id="CHEBI:59789"/>
    </ligand>
</feature>
<feature type="binding site" evidence="1">
    <location>
        <begin position="127"/>
        <end position="128"/>
    </location>
    <ligand>
        <name>S-adenosyl-L-methionine</name>
        <dbReference type="ChEBI" id="CHEBI:59789"/>
    </ligand>
</feature>
<feature type="binding site" evidence="1">
    <location>
        <position position="141"/>
    </location>
    <ligand>
        <name>S-adenosyl-L-methionine</name>
        <dbReference type="ChEBI" id="CHEBI:59789"/>
    </ligand>
</feature>
<name>RSMG_NEIMA</name>
<keyword id="KW-0963">Cytoplasm</keyword>
<keyword id="KW-0489">Methyltransferase</keyword>
<keyword id="KW-0698">rRNA processing</keyword>
<keyword id="KW-0949">S-adenosyl-L-methionine</keyword>
<keyword id="KW-0808">Transferase</keyword>
<accession>Q9JX38</accession>
<accession>A1INT9</accession>
<evidence type="ECO:0000255" key="1">
    <source>
        <dbReference type="HAMAP-Rule" id="MF_00074"/>
    </source>
</evidence>
<comment type="function">
    <text evidence="1">Specifically methylates the N7 position of guanine in position 527 of 16S rRNA.</text>
</comment>
<comment type="catalytic activity">
    <reaction evidence="1">
        <text>guanosine(527) in 16S rRNA + S-adenosyl-L-methionine = N(7)-methylguanosine(527) in 16S rRNA + S-adenosyl-L-homocysteine</text>
        <dbReference type="Rhea" id="RHEA:42732"/>
        <dbReference type="Rhea" id="RHEA-COMP:10209"/>
        <dbReference type="Rhea" id="RHEA-COMP:10210"/>
        <dbReference type="ChEBI" id="CHEBI:57856"/>
        <dbReference type="ChEBI" id="CHEBI:59789"/>
        <dbReference type="ChEBI" id="CHEBI:74269"/>
        <dbReference type="ChEBI" id="CHEBI:74480"/>
        <dbReference type="EC" id="2.1.1.170"/>
    </reaction>
</comment>
<comment type="subcellular location">
    <subcellularLocation>
        <location evidence="1">Cytoplasm</location>
    </subcellularLocation>
</comment>
<comment type="similarity">
    <text evidence="1">Belongs to the methyltransferase superfamily. RNA methyltransferase RsmG family.</text>
</comment>